<accession>Q95NQ0</accession>
<accession>Q95NR7</accession>
<name>MTH2_DROSI</name>
<organism evidence="17">
    <name type="scientific">Drosophila simulans</name>
    <name type="common">Fruit fly</name>
    <dbReference type="NCBI Taxonomy" id="7240"/>
    <lineage>
        <taxon>Eukaryota</taxon>
        <taxon>Metazoa</taxon>
        <taxon>Ecdysozoa</taxon>
        <taxon>Arthropoda</taxon>
        <taxon>Hexapoda</taxon>
        <taxon>Insecta</taxon>
        <taxon>Pterygota</taxon>
        <taxon>Neoptera</taxon>
        <taxon>Endopterygota</taxon>
        <taxon>Diptera</taxon>
        <taxon>Brachycera</taxon>
        <taxon>Muscomorpha</taxon>
        <taxon>Ephydroidea</taxon>
        <taxon>Drosophilidae</taxon>
        <taxon>Drosophila</taxon>
        <taxon>Sophophora</taxon>
    </lineage>
</organism>
<sequence length="536" mass="61840">MAERDHYHTIDDPNVPCNFYDTVNLTGHRLFPNGSYDYYGTIVPAELVGTYDYIHSSLTERIEVREHVRGCVCKFKSCLNICCPWRQVFNSEVDGCIIDHTDNRTWPDPPMLNITFRNESTILVNMFTQFAIQSFRPCPKMFSLQPETSSWDDYLLFENGSMLRVDDKLLIRKNEFCMVPTYVNESDMFYTIHPANCDMQDDHSTVKIINSYAMMFSIPFMMLTIAVYLLIPELRNQHGKSLVCYLIGLTVGYSSLCYVQLYQVDATGVTCKVFGYTAYFFFMGAYMWLSVISFDLWHNFRGTRGINRFQEKKRFLFYSLYSWGIALVFLAFTYCAQQLSNLPDNLKPGIGDGVYCWLDMSNWAAMIYFYGPILAIVVANTIMFIMTAIKIHGVQREMARIIASENSTKNLRTEKDKFGLFLRLFLIMGITWLTELISYFVGSDKGWSKLFYISDLANAMQGFLIFMLFVMKKKVKHLITNRCSSVRDGSNQRQSQYSTKTTSSSVANLSLHEKPSVEKPLVISSSVDPQKTTIFR</sequence>
<proteinExistence type="inferred from homology"/>
<gene>
    <name type="primary">mth2</name>
</gene>
<reference evidence="4" key="1">
    <citation type="journal article" date="2003" name="Mol. Ecol.">
        <title>Clines and adaptive evolution in the methuselah gene region in Drosophila melanogaster.</title>
        <authorList>
            <person name="Duvernell D.D."/>
            <person name="Schmidt P.S."/>
            <person name="Eanes W.F."/>
        </authorList>
    </citation>
    <scope>NUCLEOTIDE SEQUENCE [GENOMIC DNA]</scope>
    <source>
        <strain evidence="14">ct96_2.1s</strain>
        <strain evidence="15">ct96_5.1s</strain>
        <strain evidence="16">ct96_6.1s</strain>
        <strain evidence="17">dpf96_3.1s</strain>
        <strain evidence="8">ga96_2.1s</strain>
        <strain evidence="9">ga96_4.1s</strain>
        <strain evidence="10">ga96_5.1s</strain>
        <strain evidence="5">hfl97_1.1s</strain>
        <strain evidence="6">hfl97_2.1s</strain>
        <strain evidence="7">hfl97_4.1s</strain>
        <strain evidence="11">va96_6.1s</strain>
        <strain evidence="12">va96_7.1s</strain>
        <strain evidence="13">va96_8.1s</strain>
    </source>
</reference>
<evidence type="ECO:0000250" key="1">
    <source>
        <dbReference type="UniProtKB" id="O97148"/>
    </source>
</evidence>
<evidence type="ECO:0000255" key="2"/>
<evidence type="ECO:0000256" key="3">
    <source>
        <dbReference type="SAM" id="MobiDB-lite"/>
    </source>
</evidence>
<evidence type="ECO:0000305" key="4"/>
<evidence type="ECO:0000312" key="5">
    <source>
        <dbReference type="EMBL" id="AAK82809.1"/>
    </source>
</evidence>
<evidence type="ECO:0000312" key="6">
    <source>
        <dbReference type="EMBL" id="AAK82810.1"/>
    </source>
</evidence>
<evidence type="ECO:0000312" key="7">
    <source>
        <dbReference type="EMBL" id="AAK82811.1"/>
    </source>
</evidence>
<evidence type="ECO:0000312" key="8">
    <source>
        <dbReference type="EMBL" id="AAK82812.1"/>
    </source>
</evidence>
<evidence type="ECO:0000312" key="9">
    <source>
        <dbReference type="EMBL" id="AAK82813.1"/>
    </source>
</evidence>
<evidence type="ECO:0000312" key="10">
    <source>
        <dbReference type="EMBL" id="AAK82814.1"/>
    </source>
</evidence>
<evidence type="ECO:0000312" key="11">
    <source>
        <dbReference type="EMBL" id="AAK82815.1"/>
    </source>
</evidence>
<evidence type="ECO:0000312" key="12">
    <source>
        <dbReference type="EMBL" id="AAK82816.1"/>
    </source>
</evidence>
<evidence type="ECO:0000312" key="13">
    <source>
        <dbReference type="EMBL" id="AAK82817.1"/>
    </source>
</evidence>
<evidence type="ECO:0000312" key="14">
    <source>
        <dbReference type="EMBL" id="AAK82818.1"/>
    </source>
</evidence>
<evidence type="ECO:0000312" key="15">
    <source>
        <dbReference type="EMBL" id="AAK82819.1"/>
    </source>
</evidence>
<evidence type="ECO:0000312" key="16">
    <source>
        <dbReference type="EMBL" id="AAK82820.1"/>
    </source>
</evidence>
<evidence type="ECO:0000312" key="17">
    <source>
        <dbReference type="EMBL" id="AAK82821.1"/>
    </source>
</evidence>
<feature type="signal peptide" evidence="2">
    <location>
        <begin position="1"/>
        <end status="unknown"/>
    </location>
</feature>
<feature type="chain" id="PRO_0000013032" description="G-protein coupled receptor Mth2">
    <location>
        <begin status="unknown"/>
        <end position="536"/>
    </location>
</feature>
<feature type="topological domain" description="Extracellular" evidence="2">
    <location>
        <begin status="unknown"/>
        <end position="211"/>
    </location>
</feature>
<feature type="transmembrane region" description="Helical; Name=1" evidence="2">
    <location>
        <begin position="212"/>
        <end position="232"/>
    </location>
</feature>
<feature type="topological domain" description="Cytoplasmic" evidence="2">
    <location>
        <begin position="233"/>
        <end position="241"/>
    </location>
</feature>
<feature type="transmembrane region" description="Helical; Name=2" evidence="2">
    <location>
        <begin position="242"/>
        <end position="262"/>
    </location>
</feature>
<feature type="topological domain" description="Extracellular" evidence="2">
    <location>
        <begin position="263"/>
        <end position="273"/>
    </location>
</feature>
<feature type="transmembrane region" description="Helical; Name=3" evidence="2">
    <location>
        <begin position="274"/>
        <end position="294"/>
    </location>
</feature>
<feature type="topological domain" description="Cytoplasmic" evidence="2">
    <location>
        <begin position="295"/>
        <end position="314"/>
    </location>
</feature>
<feature type="transmembrane region" description="Helical; Name=4" evidence="2">
    <location>
        <begin position="315"/>
        <end position="335"/>
    </location>
</feature>
<feature type="topological domain" description="Extracellular" evidence="2">
    <location>
        <begin position="336"/>
        <end position="365"/>
    </location>
</feature>
<feature type="transmembrane region" description="Helical; Name=5" evidence="2">
    <location>
        <begin position="366"/>
        <end position="386"/>
    </location>
</feature>
<feature type="topological domain" description="Cytoplasmic" evidence="2">
    <location>
        <begin position="387"/>
        <end position="417"/>
    </location>
</feature>
<feature type="transmembrane region" description="Helical; Name=6" evidence="2">
    <location>
        <begin position="418"/>
        <end position="438"/>
    </location>
</feature>
<feature type="topological domain" description="Extracellular" evidence="2">
    <location>
        <begin position="439"/>
        <end position="449"/>
    </location>
</feature>
<feature type="transmembrane region" description="Helical; Name=7" evidence="2">
    <location>
        <begin position="450"/>
        <end position="470"/>
    </location>
</feature>
<feature type="topological domain" description="Cytoplasmic" evidence="2">
    <location>
        <begin position="471"/>
        <end position="536"/>
    </location>
</feature>
<feature type="region of interest" description="Disordered" evidence="3">
    <location>
        <begin position="487"/>
        <end position="506"/>
    </location>
</feature>
<feature type="compositionally biased region" description="Low complexity" evidence="3">
    <location>
        <begin position="492"/>
        <end position="505"/>
    </location>
</feature>
<feature type="glycosylation site" description="N-linked (GlcNAc...) asparagine" evidence="2">
    <location>
        <position position="24"/>
    </location>
</feature>
<feature type="glycosylation site" description="N-linked (GlcNAc...) asparagine" evidence="2">
    <location>
        <position position="33"/>
    </location>
</feature>
<feature type="glycosylation site" description="N-linked (GlcNAc...) asparagine" evidence="2">
    <location>
        <position position="103"/>
    </location>
</feature>
<feature type="glycosylation site" description="N-linked (GlcNAc...) asparagine" evidence="2">
    <location>
        <position position="113"/>
    </location>
</feature>
<feature type="glycosylation site" description="N-linked (GlcNAc...) asparagine" evidence="2">
    <location>
        <position position="118"/>
    </location>
</feature>
<feature type="glycosylation site" description="N-linked (GlcNAc...) asparagine" evidence="2">
    <location>
        <position position="159"/>
    </location>
</feature>
<feature type="glycosylation site" description="N-linked (GlcNAc...) asparagine" evidence="2">
    <location>
        <position position="184"/>
    </location>
</feature>
<feature type="disulfide bond" evidence="1">
    <location>
        <begin position="17"/>
        <end position="71"/>
    </location>
</feature>
<feature type="disulfide bond" evidence="1">
    <location>
        <begin position="73"/>
        <end position="78"/>
    </location>
</feature>
<feature type="disulfide bond" evidence="1">
    <location>
        <begin position="82"/>
        <end position="177"/>
    </location>
</feature>
<feature type="disulfide bond" evidence="1">
    <location>
        <begin position="83"/>
        <end position="96"/>
    </location>
</feature>
<feature type="disulfide bond" evidence="1">
    <location>
        <begin position="138"/>
        <end position="197"/>
    </location>
</feature>
<feature type="sequence variant" description="In strain: ct96_6.1s, hfl97_4.1s, ga96_2.1s and va96_8.1s.">
    <original>F</original>
    <variation>L</variation>
    <location>
        <position position="127"/>
    </location>
</feature>
<comment type="function">
    <text evidence="1">Involved in biological aging and stress response. Essential for adult survival (By similarity).</text>
</comment>
<comment type="subunit">
    <text evidence="1">Homodimer.</text>
</comment>
<comment type="subcellular location">
    <subcellularLocation>
        <location evidence="4">Cell membrane</location>
        <topology evidence="4">Multi-pass membrane protein</topology>
    </subcellularLocation>
</comment>
<comment type="similarity">
    <text evidence="4">Belongs to the G-protein coupled receptor 2 family. Mth subfamily.</text>
</comment>
<dbReference type="EMBL" id="AF300338">
    <property type="protein sequence ID" value="AAK82809.1"/>
    <property type="molecule type" value="Genomic_DNA"/>
</dbReference>
<dbReference type="EMBL" id="AF300337">
    <property type="protein sequence ID" value="AAK82809.1"/>
    <property type="status" value="JOINED"/>
    <property type="molecule type" value="Genomic_DNA"/>
</dbReference>
<dbReference type="EMBL" id="AF300340">
    <property type="protein sequence ID" value="AAK82810.1"/>
    <property type="molecule type" value="Genomic_DNA"/>
</dbReference>
<dbReference type="EMBL" id="AF300339">
    <property type="protein sequence ID" value="AAK82810.1"/>
    <property type="status" value="JOINED"/>
    <property type="molecule type" value="Genomic_DNA"/>
</dbReference>
<dbReference type="EMBL" id="AF300342">
    <property type="protein sequence ID" value="AAK82811.1"/>
    <property type="molecule type" value="Genomic_DNA"/>
</dbReference>
<dbReference type="EMBL" id="AF300341">
    <property type="protein sequence ID" value="AAK82811.1"/>
    <property type="status" value="JOINED"/>
    <property type="molecule type" value="Genomic_DNA"/>
</dbReference>
<dbReference type="EMBL" id="AF300344">
    <property type="protein sequence ID" value="AAK82812.1"/>
    <property type="molecule type" value="Genomic_DNA"/>
</dbReference>
<dbReference type="EMBL" id="AF300343">
    <property type="protein sequence ID" value="AAK82812.1"/>
    <property type="status" value="JOINED"/>
    <property type="molecule type" value="Genomic_DNA"/>
</dbReference>
<dbReference type="EMBL" id="AF300346">
    <property type="protein sequence ID" value="AAK82813.1"/>
    <property type="molecule type" value="Genomic_DNA"/>
</dbReference>
<dbReference type="EMBL" id="AF300345">
    <property type="protein sequence ID" value="AAK82813.1"/>
    <property type="status" value="JOINED"/>
    <property type="molecule type" value="Genomic_DNA"/>
</dbReference>
<dbReference type="EMBL" id="AF300348">
    <property type="protein sequence ID" value="AAK82814.1"/>
    <property type="molecule type" value="Genomic_DNA"/>
</dbReference>
<dbReference type="EMBL" id="AF300347">
    <property type="protein sequence ID" value="AAK82814.1"/>
    <property type="status" value="JOINED"/>
    <property type="molecule type" value="Genomic_DNA"/>
</dbReference>
<dbReference type="EMBL" id="AF300350">
    <property type="protein sequence ID" value="AAK82815.1"/>
    <property type="molecule type" value="Genomic_DNA"/>
</dbReference>
<dbReference type="EMBL" id="AF300349">
    <property type="protein sequence ID" value="AAK82815.1"/>
    <property type="status" value="JOINED"/>
    <property type="molecule type" value="Genomic_DNA"/>
</dbReference>
<dbReference type="EMBL" id="AF300352">
    <property type="protein sequence ID" value="AAK82816.1"/>
    <property type="molecule type" value="Genomic_DNA"/>
</dbReference>
<dbReference type="EMBL" id="AF300351">
    <property type="protein sequence ID" value="AAK82816.1"/>
    <property type="status" value="JOINED"/>
    <property type="molecule type" value="Genomic_DNA"/>
</dbReference>
<dbReference type="EMBL" id="AF300354">
    <property type="protein sequence ID" value="AAK82817.1"/>
    <property type="molecule type" value="Genomic_DNA"/>
</dbReference>
<dbReference type="EMBL" id="AF300353">
    <property type="protein sequence ID" value="AAK82817.1"/>
    <property type="status" value="JOINED"/>
    <property type="molecule type" value="Genomic_DNA"/>
</dbReference>
<dbReference type="EMBL" id="AF300356">
    <property type="protein sequence ID" value="AAK82818.1"/>
    <property type="molecule type" value="Genomic_DNA"/>
</dbReference>
<dbReference type="EMBL" id="AF300355">
    <property type="protein sequence ID" value="AAK82818.1"/>
    <property type="status" value="JOINED"/>
    <property type="molecule type" value="Genomic_DNA"/>
</dbReference>
<dbReference type="EMBL" id="AF300358">
    <property type="protein sequence ID" value="AAK82819.1"/>
    <property type="molecule type" value="Genomic_DNA"/>
</dbReference>
<dbReference type="EMBL" id="AF300357">
    <property type="protein sequence ID" value="AAK82819.1"/>
    <property type="status" value="JOINED"/>
    <property type="molecule type" value="Genomic_DNA"/>
</dbReference>
<dbReference type="EMBL" id="AF300360">
    <property type="protein sequence ID" value="AAK82820.1"/>
    <property type="molecule type" value="Genomic_DNA"/>
</dbReference>
<dbReference type="EMBL" id="AF300359">
    <property type="protein sequence ID" value="AAK82820.1"/>
    <property type="status" value="JOINED"/>
    <property type="molecule type" value="Genomic_DNA"/>
</dbReference>
<dbReference type="EMBL" id="AF300362">
    <property type="protein sequence ID" value="AAK82821.1"/>
    <property type="molecule type" value="Genomic_DNA"/>
</dbReference>
<dbReference type="EMBL" id="AF300361">
    <property type="protein sequence ID" value="AAK82821.1"/>
    <property type="status" value="JOINED"/>
    <property type="molecule type" value="Genomic_DNA"/>
</dbReference>
<dbReference type="SMR" id="Q95NQ0"/>
<dbReference type="GlyCosmos" id="Q95NQ0">
    <property type="glycosylation" value="7 sites, No reported glycans"/>
</dbReference>
<dbReference type="EnsemblMetazoa" id="FBtr0348778">
    <property type="protein sequence ID" value="FBpp0313680"/>
    <property type="gene ID" value="FBgn0191665"/>
</dbReference>
<dbReference type="EnsemblMetazoa" id="XM_016176476.3">
    <property type="protein sequence ID" value="XP_016029697.1"/>
    <property type="gene ID" value="LOC6740503"/>
</dbReference>
<dbReference type="OrthoDB" id="6134459at2759"/>
<dbReference type="Bgee" id="FBgn0191665">
    <property type="expression patterns" value="Expressed in male reproductive system and 3 other cell types or tissues"/>
</dbReference>
<dbReference type="GO" id="GO:0005886">
    <property type="term" value="C:plasma membrane"/>
    <property type="evidence" value="ECO:0007669"/>
    <property type="project" value="UniProtKB-SubCell"/>
</dbReference>
<dbReference type="GO" id="GO:0008528">
    <property type="term" value="F:G protein-coupled peptide receptor activity"/>
    <property type="evidence" value="ECO:0007669"/>
    <property type="project" value="TreeGrafter"/>
</dbReference>
<dbReference type="GO" id="GO:0007166">
    <property type="term" value="P:cell surface receptor signaling pathway"/>
    <property type="evidence" value="ECO:0007669"/>
    <property type="project" value="InterPro"/>
</dbReference>
<dbReference type="CDD" id="cd15039">
    <property type="entry name" value="7tmB3_Methuselah-like"/>
    <property type="match status" value="1"/>
</dbReference>
<dbReference type="CDD" id="cd00251">
    <property type="entry name" value="Mth_Ecto"/>
    <property type="match status" value="1"/>
</dbReference>
<dbReference type="FunFam" id="2.30.160.11:FF:000001">
    <property type="entry name" value="G-protein coupled receptor Mth"/>
    <property type="match status" value="1"/>
</dbReference>
<dbReference type="FunFam" id="1.20.1070.10:FF:000386">
    <property type="entry name" value="Methuselah-like 10, isoform D"/>
    <property type="match status" value="1"/>
</dbReference>
<dbReference type="Gene3D" id="2.30.160.11">
    <property type="match status" value="1"/>
</dbReference>
<dbReference type="Gene3D" id="1.20.1070.10">
    <property type="entry name" value="Rhodopsin 7-helix transmembrane proteins"/>
    <property type="match status" value="1"/>
</dbReference>
<dbReference type="InterPro" id="IPR017981">
    <property type="entry name" value="GPCR_2-like_7TM"/>
</dbReference>
<dbReference type="InterPro" id="IPR000832">
    <property type="entry name" value="GPCR_2_secretin-like"/>
</dbReference>
<dbReference type="InterPro" id="IPR044860">
    <property type="entry name" value="Methusela_ecto_dom_1"/>
</dbReference>
<dbReference type="InterPro" id="IPR010596">
    <property type="entry name" value="Methuselah_N_dom"/>
</dbReference>
<dbReference type="InterPro" id="IPR036272">
    <property type="entry name" value="Methuselah_N_sf"/>
</dbReference>
<dbReference type="InterPro" id="IPR051384">
    <property type="entry name" value="Mth_GPCR"/>
</dbReference>
<dbReference type="PANTHER" id="PTHR47154">
    <property type="entry name" value="G-PROTEIN COUPLED RECEPTOR MTH-RELATED"/>
    <property type="match status" value="1"/>
</dbReference>
<dbReference type="PANTHER" id="PTHR47154:SF2">
    <property type="entry name" value="G-PROTEIN COUPLED RECEPTOR MTH-RELATED"/>
    <property type="match status" value="1"/>
</dbReference>
<dbReference type="Pfam" id="PF00002">
    <property type="entry name" value="7tm_2"/>
    <property type="match status" value="1"/>
</dbReference>
<dbReference type="Pfam" id="PF06652">
    <property type="entry name" value="Methuselah_N"/>
    <property type="match status" value="1"/>
</dbReference>
<dbReference type="SUPFAM" id="SSF81321">
    <property type="entry name" value="Family A G protein-coupled receptor-like"/>
    <property type="match status" value="1"/>
</dbReference>
<dbReference type="SUPFAM" id="SSF63877">
    <property type="entry name" value="Methuselah ectodomain"/>
    <property type="match status" value="1"/>
</dbReference>
<dbReference type="PROSITE" id="PS50261">
    <property type="entry name" value="G_PROTEIN_RECEP_F2_4"/>
    <property type="match status" value="1"/>
</dbReference>
<keyword id="KW-1003">Cell membrane</keyword>
<keyword id="KW-1015">Disulfide bond</keyword>
<keyword id="KW-0297">G-protein coupled receptor</keyword>
<keyword id="KW-0325">Glycoprotein</keyword>
<keyword id="KW-0472">Membrane</keyword>
<keyword id="KW-0675">Receptor</keyword>
<keyword id="KW-0732">Signal</keyword>
<keyword id="KW-0807">Transducer</keyword>
<keyword id="KW-0812">Transmembrane</keyword>
<keyword id="KW-1133">Transmembrane helix</keyword>
<protein>
    <recommendedName>
        <fullName>G-protein coupled receptor Mth2</fullName>
    </recommendedName>
    <alternativeName>
        <fullName>Protein methuselah-2</fullName>
    </alternativeName>
</protein>